<dbReference type="EC" id="2.7.7.72" evidence="1"/>
<dbReference type="EC" id="3.1.3.-" evidence="1"/>
<dbReference type="EC" id="3.1.4.-" evidence="1"/>
<dbReference type="EMBL" id="CP000094">
    <property type="protein sequence ID" value="ABA76879.1"/>
    <property type="molecule type" value="Genomic_DNA"/>
</dbReference>
<dbReference type="RefSeq" id="WP_011336214.1">
    <property type="nucleotide sequence ID" value="NC_007492.2"/>
</dbReference>
<dbReference type="SMR" id="Q3K5S5"/>
<dbReference type="KEGG" id="pfo:Pfl01_5142"/>
<dbReference type="eggNOG" id="COG0617">
    <property type="taxonomic scope" value="Bacteria"/>
</dbReference>
<dbReference type="HOGENOM" id="CLU_015961_1_1_6"/>
<dbReference type="Proteomes" id="UP000002704">
    <property type="component" value="Chromosome"/>
</dbReference>
<dbReference type="GO" id="GO:0005524">
    <property type="term" value="F:ATP binding"/>
    <property type="evidence" value="ECO:0007669"/>
    <property type="project" value="UniProtKB-UniRule"/>
</dbReference>
<dbReference type="GO" id="GO:0004810">
    <property type="term" value="F:CCA tRNA nucleotidyltransferase activity"/>
    <property type="evidence" value="ECO:0007669"/>
    <property type="project" value="UniProtKB-UniRule"/>
</dbReference>
<dbReference type="GO" id="GO:0004112">
    <property type="term" value="F:cyclic-nucleotide phosphodiesterase activity"/>
    <property type="evidence" value="ECO:0007669"/>
    <property type="project" value="UniProtKB-UniRule"/>
</dbReference>
<dbReference type="GO" id="GO:0000287">
    <property type="term" value="F:magnesium ion binding"/>
    <property type="evidence" value="ECO:0007669"/>
    <property type="project" value="UniProtKB-UniRule"/>
</dbReference>
<dbReference type="GO" id="GO:0016791">
    <property type="term" value="F:phosphatase activity"/>
    <property type="evidence" value="ECO:0007669"/>
    <property type="project" value="UniProtKB-UniRule"/>
</dbReference>
<dbReference type="GO" id="GO:0000049">
    <property type="term" value="F:tRNA binding"/>
    <property type="evidence" value="ECO:0007669"/>
    <property type="project" value="UniProtKB-UniRule"/>
</dbReference>
<dbReference type="GO" id="GO:0042245">
    <property type="term" value="P:RNA repair"/>
    <property type="evidence" value="ECO:0007669"/>
    <property type="project" value="UniProtKB-KW"/>
</dbReference>
<dbReference type="GO" id="GO:0001680">
    <property type="term" value="P:tRNA 3'-terminal CCA addition"/>
    <property type="evidence" value="ECO:0007669"/>
    <property type="project" value="UniProtKB-UniRule"/>
</dbReference>
<dbReference type="CDD" id="cd00077">
    <property type="entry name" value="HDc"/>
    <property type="match status" value="1"/>
</dbReference>
<dbReference type="CDD" id="cd05398">
    <property type="entry name" value="NT_ClassII-CCAase"/>
    <property type="match status" value="1"/>
</dbReference>
<dbReference type="FunFam" id="1.10.3090.10:FF:000001">
    <property type="entry name" value="Multifunctional CCA protein"/>
    <property type="match status" value="1"/>
</dbReference>
<dbReference type="Gene3D" id="3.30.460.10">
    <property type="entry name" value="Beta Polymerase, domain 2"/>
    <property type="match status" value="1"/>
</dbReference>
<dbReference type="Gene3D" id="1.10.3090.10">
    <property type="entry name" value="cca-adding enzyme, domain 2"/>
    <property type="match status" value="1"/>
</dbReference>
<dbReference type="HAMAP" id="MF_01261">
    <property type="entry name" value="CCA_bact_type1"/>
    <property type="match status" value="1"/>
</dbReference>
<dbReference type="HAMAP" id="MF_01262">
    <property type="entry name" value="CCA_bact_type2"/>
    <property type="match status" value="1"/>
</dbReference>
<dbReference type="InterPro" id="IPR012006">
    <property type="entry name" value="CCA_bact"/>
</dbReference>
<dbReference type="InterPro" id="IPR003607">
    <property type="entry name" value="HD/PDEase_dom"/>
</dbReference>
<dbReference type="InterPro" id="IPR006674">
    <property type="entry name" value="HD_domain"/>
</dbReference>
<dbReference type="InterPro" id="IPR043519">
    <property type="entry name" value="NT_sf"/>
</dbReference>
<dbReference type="InterPro" id="IPR002646">
    <property type="entry name" value="PolA_pol_head_dom"/>
</dbReference>
<dbReference type="InterPro" id="IPR032828">
    <property type="entry name" value="PolyA_RNA-bd"/>
</dbReference>
<dbReference type="InterPro" id="IPR050124">
    <property type="entry name" value="tRNA_CCA-adding_enzyme"/>
</dbReference>
<dbReference type="NCBIfam" id="NF008137">
    <property type="entry name" value="PRK10885.1"/>
    <property type="match status" value="1"/>
</dbReference>
<dbReference type="PANTHER" id="PTHR47545">
    <property type="entry name" value="MULTIFUNCTIONAL CCA PROTEIN"/>
    <property type="match status" value="1"/>
</dbReference>
<dbReference type="PANTHER" id="PTHR47545:SF1">
    <property type="entry name" value="MULTIFUNCTIONAL CCA PROTEIN"/>
    <property type="match status" value="1"/>
</dbReference>
<dbReference type="Pfam" id="PF01966">
    <property type="entry name" value="HD"/>
    <property type="match status" value="1"/>
</dbReference>
<dbReference type="Pfam" id="PF01743">
    <property type="entry name" value="PolyA_pol"/>
    <property type="match status" value="1"/>
</dbReference>
<dbReference type="Pfam" id="PF12627">
    <property type="entry name" value="PolyA_pol_RNAbd"/>
    <property type="match status" value="1"/>
</dbReference>
<dbReference type="PIRSF" id="PIRSF000813">
    <property type="entry name" value="CCA_bact"/>
    <property type="match status" value="1"/>
</dbReference>
<dbReference type="SUPFAM" id="SSF81301">
    <property type="entry name" value="Nucleotidyltransferase"/>
    <property type="match status" value="1"/>
</dbReference>
<dbReference type="SUPFAM" id="SSF81891">
    <property type="entry name" value="Poly A polymerase C-terminal region-like"/>
    <property type="match status" value="1"/>
</dbReference>
<dbReference type="PROSITE" id="PS51831">
    <property type="entry name" value="HD"/>
    <property type="match status" value="1"/>
</dbReference>
<evidence type="ECO:0000255" key="1">
    <source>
        <dbReference type="HAMAP-Rule" id="MF_01261"/>
    </source>
</evidence>
<proteinExistence type="inferred from homology"/>
<protein>
    <recommendedName>
        <fullName evidence="1">Multifunctional CCA protein</fullName>
    </recommendedName>
    <domain>
        <recommendedName>
            <fullName evidence="1">CCA-adding enzyme</fullName>
            <ecNumber evidence="1">2.7.7.72</ecNumber>
        </recommendedName>
        <alternativeName>
            <fullName evidence="1">CCA tRNA nucleotidyltransferase</fullName>
        </alternativeName>
        <alternativeName>
            <fullName evidence="1">tRNA CCA-pyrophosphorylase</fullName>
        </alternativeName>
        <alternativeName>
            <fullName evidence="1">tRNA adenylyl-/cytidylyl-transferase</fullName>
        </alternativeName>
        <alternativeName>
            <fullName evidence="1">tRNA nucleotidyltransferase</fullName>
        </alternativeName>
        <alternativeName>
            <fullName evidence="1">tRNA-NT</fullName>
        </alternativeName>
    </domain>
    <domain>
        <recommendedName>
            <fullName evidence="1">2'-nucleotidase</fullName>
            <ecNumber evidence="1">3.1.3.-</ecNumber>
        </recommendedName>
    </domain>
    <domain>
        <recommendedName>
            <fullName evidence="1">2',3'-cyclic phosphodiesterase</fullName>
            <ecNumber evidence="1">3.1.4.-</ecNumber>
        </recommendedName>
    </domain>
    <domain>
        <recommendedName>
            <fullName evidence="1">Phosphatase</fullName>
            <ecNumber evidence="1">3.1.3.-</ecNumber>
        </recommendedName>
    </domain>
</protein>
<accession>Q3K5S5</accession>
<name>CCA_PSEPF</name>
<feature type="chain" id="PRO_1000054285" description="Multifunctional CCA protein">
    <location>
        <begin position="1"/>
        <end position="409"/>
    </location>
</feature>
<feature type="domain" description="HD" evidence="1">
    <location>
        <begin position="228"/>
        <end position="329"/>
    </location>
</feature>
<feature type="binding site" evidence="1">
    <location>
        <position position="8"/>
    </location>
    <ligand>
        <name>ATP</name>
        <dbReference type="ChEBI" id="CHEBI:30616"/>
    </ligand>
</feature>
<feature type="binding site" evidence="1">
    <location>
        <position position="8"/>
    </location>
    <ligand>
        <name>CTP</name>
        <dbReference type="ChEBI" id="CHEBI:37563"/>
    </ligand>
</feature>
<feature type="binding site" evidence="1">
    <location>
        <position position="11"/>
    </location>
    <ligand>
        <name>ATP</name>
        <dbReference type="ChEBI" id="CHEBI:30616"/>
    </ligand>
</feature>
<feature type="binding site" evidence="1">
    <location>
        <position position="11"/>
    </location>
    <ligand>
        <name>CTP</name>
        <dbReference type="ChEBI" id="CHEBI:37563"/>
    </ligand>
</feature>
<feature type="binding site" evidence="1">
    <location>
        <position position="21"/>
    </location>
    <ligand>
        <name>Mg(2+)</name>
        <dbReference type="ChEBI" id="CHEBI:18420"/>
    </ligand>
</feature>
<feature type="binding site" evidence="1">
    <location>
        <position position="23"/>
    </location>
    <ligand>
        <name>Mg(2+)</name>
        <dbReference type="ChEBI" id="CHEBI:18420"/>
    </ligand>
</feature>
<feature type="binding site" evidence="1">
    <location>
        <position position="91"/>
    </location>
    <ligand>
        <name>ATP</name>
        <dbReference type="ChEBI" id="CHEBI:30616"/>
    </ligand>
</feature>
<feature type="binding site" evidence="1">
    <location>
        <position position="91"/>
    </location>
    <ligand>
        <name>CTP</name>
        <dbReference type="ChEBI" id="CHEBI:37563"/>
    </ligand>
</feature>
<feature type="binding site" evidence="1">
    <location>
        <position position="137"/>
    </location>
    <ligand>
        <name>ATP</name>
        <dbReference type="ChEBI" id="CHEBI:30616"/>
    </ligand>
</feature>
<feature type="binding site" evidence="1">
    <location>
        <position position="137"/>
    </location>
    <ligand>
        <name>CTP</name>
        <dbReference type="ChEBI" id="CHEBI:37563"/>
    </ligand>
</feature>
<feature type="binding site" evidence="1">
    <location>
        <position position="140"/>
    </location>
    <ligand>
        <name>ATP</name>
        <dbReference type="ChEBI" id="CHEBI:30616"/>
    </ligand>
</feature>
<feature type="binding site" evidence="1">
    <location>
        <position position="140"/>
    </location>
    <ligand>
        <name>CTP</name>
        <dbReference type="ChEBI" id="CHEBI:37563"/>
    </ligand>
</feature>
<gene>
    <name evidence="1" type="primary">cca</name>
    <name type="ordered locus">Pfl01_5142</name>
</gene>
<organism>
    <name type="scientific">Pseudomonas fluorescens (strain Pf0-1)</name>
    <dbReference type="NCBI Taxonomy" id="205922"/>
    <lineage>
        <taxon>Bacteria</taxon>
        <taxon>Pseudomonadati</taxon>
        <taxon>Pseudomonadota</taxon>
        <taxon>Gammaproteobacteria</taxon>
        <taxon>Pseudomonadales</taxon>
        <taxon>Pseudomonadaceae</taxon>
        <taxon>Pseudomonas</taxon>
    </lineage>
</organism>
<comment type="function">
    <text evidence="1">Catalyzes the addition and repair of the essential 3'-terminal CCA sequence in tRNAs without using a nucleic acid template. Adds these three nucleotides in the order of C, C, and A to the tRNA nucleotide-73, using CTP and ATP as substrates and producing inorganic pyrophosphate. tRNA 3'-terminal CCA addition is required both for tRNA processing and repair. Also involved in tRNA surveillance by mediating tandem CCA addition to generate a CCACCA at the 3' terminus of unstable tRNAs. While stable tRNAs receive only 3'-terminal CCA, unstable tRNAs are marked with CCACCA and rapidly degraded.</text>
</comment>
<comment type="catalytic activity">
    <reaction evidence="1">
        <text>a tRNA precursor + 2 CTP + ATP = a tRNA with a 3' CCA end + 3 diphosphate</text>
        <dbReference type="Rhea" id="RHEA:14433"/>
        <dbReference type="Rhea" id="RHEA-COMP:10465"/>
        <dbReference type="Rhea" id="RHEA-COMP:10468"/>
        <dbReference type="ChEBI" id="CHEBI:30616"/>
        <dbReference type="ChEBI" id="CHEBI:33019"/>
        <dbReference type="ChEBI" id="CHEBI:37563"/>
        <dbReference type="ChEBI" id="CHEBI:74896"/>
        <dbReference type="ChEBI" id="CHEBI:83071"/>
        <dbReference type="EC" id="2.7.7.72"/>
    </reaction>
</comment>
<comment type="catalytic activity">
    <reaction evidence="1">
        <text>a tRNA with a 3' CCA end + 2 CTP + ATP = a tRNA with a 3' CCACCA end + 3 diphosphate</text>
        <dbReference type="Rhea" id="RHEA:76235"/>
        <dbReference type="Rhea" id="RHEA-COMP:10468"/>
        <dbReference type="Rhea" id="RHEA-COMP:18655"/>
        <dbReference type="ChEBI" id="CHEBI:30616"/>
        <dbReference type="ChEBI" id="CHEBI:33019"/>
        <dbReference type="ChEBI" id="CHEBI:37563"/>
        <dbReference type="ChEBI" id="CHEBI:83071"/>
        <dbReference type="ChEBI" id="CHEBI:195187"/>
    </reaction>
    <physiologicalReaction direction="left-to-right" evidence="1">
        <dbReference type="Rhea" id="RHEA:76236"/>
    </physiologicalReaction>
</comment>
<comment type="cofactor">
    <cofactor evidence="1">
        <name>Mg(2+)</name>
        <dbReference type="ChEBI" id="CHEBI:18420"/>
    </cofactor>
    <text evidence="1">Magnesium is required for nucleotidyltransferase activity.</text>
</comment>
<comment type="cofactor">
    <cofactor evidence="1">
        <name>Ni(2+)</name>
        <dbReference type="ChEBI" id="CHEBI:49786"/>
    </cofactor>
    <text evidence="1">Nickel for phosphatase activity.</text>
</comment>
<comment type="subunit">
    <text evidence="1">Monomer. Can also form homodimers and oligomers.</text>
</comment>
<comment type="domain">
    <text evidence="1">Comprises two domains: an N-terminal domain containing the nucleotidyltransferase activity and a C-terminal HD domain associated with both phosphodiesterase and phosphatase activities.</text>
</comment>
<comment type="miscellaneous">
    <text evidence="1">A single active site specifically recognizes both ATP and CTP and is responsible for their addition.</text>
</comment>
<comment type="similarity">
    <text evidence="1">Belongs to the tRNA nucleotidyltransferase/poly(A) polymerase family. Bacterial CCA-adding enzyme type 1 subfamily.</text>
</comment>
<reference key="1">
    <citation type="journal article" date="2009" name="Genome Biol.">
        <title>Genomic and genetic analyses of diversity and plant interactions of Pseudomonas fluorescens.</title>
        <authorList>
            <person name="Silby M.W."/>
            <person name="Cerdeno-Tarraga A.M."/>
            <person name="Vernikos G.S."/>
            <person name="Giddens S.R."/>
            <person name="Jackson R.W."/>
            <person name="Preston G.M."/>
            <person name="Zhang X.-X."/>
            <person name="Moon C.D."/>
            <person name="Gehrig S.M."/>
            <person name="Godfrey S.A.C."/>
            <person name="Knight C.G."/>
            <person name="Malone J.G."/>
            <person name="Robinson Z."/>
            <person name="Spiers A.J."/>
            <person name="Harris S."/>
            <person name="Challis G.L."/>
            <person name="Yaxley A.M."/>
            <person name="Harris D."/>
            <person name="Seeger K."/>
            <person name="Murphy L."/>
            <person name="Rutter S."/>
            <person name="Squares R."/>
            <person name="Quail M.A."/>
            <person name="Saunders E."/>
            <person name="Mavromatis K."/>
            <person name="Brettin T.S."/>
            <person name="Bentley S.D."/>
            <person name="Hothersall J."/>
            <person name="Stephens E."/>
            <person name="Thomas C.M."/>
            <person name="Parkhill J."/>
            <person name="Levy S.B."/>
            <person name="Rainey P.B."/>
            <person name="Thomson N.R."/>
        </authorList>
    </citation>
    <scope>NUCLEOTIDE SEQUENCE [LARGE SCALE GENOMIC DNA]</scope>
    <source>
        <strain>Pf0-1</strain>
    </source>
</reference>
<sequence>MQIYKVGGAVRDRLLGKPVTDIDWVVVGATTEEMLAKGFRPVGADFPVFLHPKSGEEYALARTERKSGRGYGGFTFHASPEVTLEEDLIRRDLTINAMAEDDQQNLTDPYHGQRDLEERILRHVSPAFAEDPLRVLRVARFAARYAELGFKVAPETLELMRQLSESGELEALTAERSWKEISRALMEDQPQVFIQVLRDCGALKVLMPEVDALFGVPQPEAHHPEIDSGLHTLSVLEQSALHKQPLTVRWACLLHDLGKGLTPEEEWPRHIAHEHKGLKLIKAVNERFKAPKDCQELALLVGQYHTHGHRALELKASTLLELLQSFDVYRRPQRFEEFIVACEMDARGRKGLEQRSYPQADYLRGAANVARGVAVQPLLEKGFKGPELGEALKRERLKALKVYKESAAS</sequence>
<keyword id="KW-0067">ATP-binding</keyword>
<keyword id="KW-0378">Hydrolase</keyword>
<keyword id="KW-0460">Magnesium</keyword>
<keyword id="KW-0479">Metal-binding</keyword>
<keyword id="KW-0511">Multifunctional enzyme</keyword>
<keyword id="KW-0533">Nickel</keyword>
<keyword id="KW-0547">Nucleotide-binding</keyword>
<keyword id="KW-0548">Nucleotidyltransferase</keyword>
<keyword id="KW-0692">RNA repair</keyword>
<keyword id="KW-0694">RNA-binding</keyword>
<keyword id="KW-0808">Transferase</keyword>
<keyword id="KW-0819">tRNA processing</keyword>